<dbReference type="EMBL" id="AF032039">
    <property type="protein sequence ID" value="AAC52109.1"/>
    <property type="molecule type" value="Genomic_DNA"/>
</dbReference>
<dbReference type="EMBL" id="AF032038">
    <property type="protein sequence ID" value="AAC52109.1"/>
    <property type="status" value="JOINED"/>
    <property type="molecule type" value="Genomic_DNA"/>
</dbReference>
<dbReference type="BMRB" id="O77520"/>
<dbReference type="SMR" id="O77520"/>
<dbReference type="GO" id="GO:0005576">
    <property type="term" value="C:extracellular region"/>
    <property type="evidence" value="ECO:0007669"/>
    <property type="project" value="UniProtKB-SubCell"/>
</dbReference>
<dbReference type="GO" id="GO:0042612">
    <property type="term" value="C:MHC class I protein complex"/>
    <property type="evidence" value="ECO:0007669"/>
    <property type="project" value="UniProtKB-KW"/>
</dbReference>
<dbReference type="GO" id="GO:0002474">
    <property type="term" value="P:antigen processing and presentation of peptide antigen via MHC class I"/>
    <property type="evidence" value="ECO:0007669"/>
    <property type="project" value="UniProtKB-KW"/>
</dbReference>
<dbReference type="GO" id="GO:0006955">
    <property type="term" value="P:immune response"/>
    <property type="evidence" value="ECO:0007669"/>
    <property type="project" value="InterPro"/>
</dbReference>
<dbReference type="CDD" id="cd05770">
    <property type="entry name" value="IgC1_beta2m"/>
    <property type="match status" value="1"/>
</dbReference>
<dbReference type="FunFam" id="2.60.40.10:FF:001005">
    <property type="entry name" value="Beta-2-microglobulin"/>
    <property type="match status" value="1"/>
</dbReference>
<dbReference type="Gene3D" id="2.60.40.10">
    <property type="entry name" value="Immunoglobulins"/>
    <property type="match status" value="1"/>
</dbReference>
<dbReference type="InterPro" id="IPR015707">
    <property type="entry name" value="B2Microglobulin"/>
</dbReference>
<dbReference type="InterPro" id="IPR007110">
    <property type="entry name" value="Ig-like_dom"/>
</dbReference>
<dbReference type="InterPro" id="IPR036179">
    <property type="entry name" value="Ig-like_dom_sf"/>
</dbReference>
<dbReference type="InterPro" id="IPR013783">
    <property type="entry name" value="Ig-like_fold"/>
</dbReference>
<dbReference type="InterPro" id="IPR003006">
    <property type="entry name" value="Ig/MHC_CS"/>
</dbReference>
<dbReference type="InterPro" id="IPR003597">
    <property type="entry name" value="Ig_C1-set"/>
</dbReference>
<dbReference type="InterPro" id="IPR050160">
    <property type="entry name" value="MHC/Immunoglobulin"/>
</dbReference>
<dbReference type="PANTHER" id="PTHR19944:SF62">
    <property type="entry name" value="BETA-2-MICROGLOBULIN"/>
    <property type="match status" value="1"/>
</dbReference>
<dbReference type="PANTHER" id="PTHR19944">
    <property type="entry name" value="MHC CLASS II-RELATED"/>
    <property type="match status" value="1"/>
</dbReference>
<dbReference type="Pfam" id="PF07654">
    <property type="entry name" value="C1-set"/>
    <property type="match status" value="1"/>
</dbReference>
<dbReference type="SMART" id="SM00407">
    <property type="entry name" value="IGc1"/>
    <property type="match status" value="1"/>
</dbReference>
<dbReference type="SUPFAM" id="SSF48726">
    <property type="entry name" value="Immunoglobulin"/>
    <property type="match status" value="1"/>
</dbReference>
<dbReference type="PROSITE" id="PS50835">
    <property type="entry name" value="IG_LIKE"/>
    <property type="match status" value="1"/>
</dbReference>
<dbReference type="PROSITE" id="PS00290">
    <property type="entry name" value="IG_MHC"/>
    <property type="match status" value="1"/>
</dbReference>
<feature type="signal peptide" evidence="1">
    <location>
        <begin position="1"/>
        <end position="20"/>
    </location>
</feature>
<feature type="chain" id="PRO_0000018761" description="Beta-2-microglobulin">
    <location>
        <begin position="21"/>
        <end position="119"/>
    </location>
</feature>
<feature type="domain" description="Ig-like C1-type">
    <location>
        <begin position="25"/>
        <end position="114"/>
    </location>
</feature>
<feature type="disulfide bond" evidence="2">
    <location>
        <begin position="45"/>
        <end position="100"/>
    </location>
</feature>
<accession>O77520</accession>
<evidence type="ECO:0000250" key="1"/>
<evidence type="ECO:0000255" key="2">
    <source>
        <dbReference type="PROSITE-ProRule" id="PRU00114"/>
    </source>
</evidence>
<evidence type="ECO:0000305" key="3"/>
<protein>
    <recommendedName>
        <fullName>Beta-2-microglobulin</fullName>
    </recommendedName>
</protein>
<sequence length="119" mass="13670">MARFVVVALLVLLSLSGLEAVQRAPKIQVYSRHPAENGKPNFLNCYVSGFHPSDIEVDLLKNGKKIEKVEHSDLSFSKDWTFYLLYYTEFTPNEKDEYACRVSHVTFSTPKTVKWGRNI</sequence>
<comment type="function">
    <text evidence="1">Component of the class I major histocompatibility complex (MHC). Involved in the presentation of peptide antigens to the immune system (By similarity).</text>
</comment>
<comment type="subunit">
    <text evidence="1">Heterodimer of an alpha chain and a beta chain. Beta-2-microglobulin is the beta-chain of major histocompatibility complex class I molecules (By similarity).</text>
</comment>
<comment type="subcellular location">
    <subcellularLocation>
        <location evidence="1">Secreted</location>
    </subcellularLocation>
</comment>
<comment type="similarity">
    <text evidence="3">Belongs to the beta-2-microglobulin family.</text>
</comment>
<proteinExistence type="inferred from homology"/>
<reference key="1">
    <citation type="journal article" date="1998" name="Immunogenetics">
        <title>Beta-2-microglobulin in neotropical primates (Platyrrhini).</title>
        <authorList>
            <person name="Canavez F.C."/>
            <person name="Ladasky J.J."/>
            <person name="Muniz J.A.P.C."/>
            <person name="Seuanez H.N."/>
            <person name="Parham P."/>
        </authorList>
    </citation>
    <scope>NUCLEOTIDE SEQUENCE [GENOMIC DNA]</scope>
    <source>
        <tissue>Blood</tissue>
    </source>
</reference>
<gene>
    <name type="primary">B2M</name>
</gene>
<name>B2MG_CALGO</name>
<keyword id="KW-1015">Disulfide bond</keyword>
<keyword id="KW-0391">Immunity</keyword>
<keyword id="KW-0393">Immunoglobulin domain</keyword>
<keyword id="KW-0490">MHC I</keyword>
<keyword id="KW-0964">Secreted</keyword>
<keyword id="KW-0732">Signal</keyword>
<organism>
    <name type="scientific">Callimico goeldii</name>
    <name type="common">Goeldi's marmoset</name>
    <dbReference type="NCBI Taxonomy" id="9495"/>
    <lineage>
        <taxon>Eukaryota</taxon>
        <taxon>Metazoa</taxon>
        <taxon>Chordata</taxon>
        <taxon>Craniata</taxon>
        <taxon>Vertebrata</taxon>
        <taxon>Euteleostomi</taxon>
        <taxon>Mammalia</taxon>
        <taxon>Eutheria</taxon>
        <taxon>Euarchontoglires</taxon>
        <taxon>Primates</taxon>
        <taxon>Haplorrhini</taxon>
        <taxon>Platyrrhini</taxon>
        <taxon>Cebidae</taxon>
        <taxon>Callitrichinae</taxon>
        <taxon>Callimico</taxon>
    </lineage>
</organism>